<organism>
    <name type="scientific">Ralstonia pickettii (strain 12J)</name>
    <dbReference type="NCBI Taxonomy" id="402626"/>
    <lineage>
        <taxon>Bacteria</taxon>
        <taxon>Pseudomonadati</taxon>
        <taxon>Pseudomonadota</taxon>
        <taxon>Betaproteobacteria</taxon>
        <taxon>Burkholderiales</taxon>
        <taxon>Burkholderiaceae</taxon>
        <taxon>Ralstonia</taxon>
    </lineage>
</organism>
<name>NUOD_RALPJ</name>
<reference key="1">
    <citation type="submission" date="2008-05" db="EMBL/GenBank/DDBJ databases">
        <title>Complete sequence of chromosome 1 of Ralstonia pickettii 12J.</title>
        <authorList>
            <person name="Lucas S."/>
            <person name="Copeland A."/>
            <person name="Lapidus A."/>
            <person name="Glavina del Rio T."/>
            <person name="Dalin E."/>
            <person name="Tice H."/>
            <person name="Bruce D."/>
            <person name="Goodwin L."/>
            <person name="Pitluck S."/>
            <person name="Meincke L."/>
            <person name="Brettin T."/>
            <person name="Detter J.C."/>
            <person name="Han C."/>
            <person name="Kuske C.R."/>
            <person name="Schmutz J."/>
            <person name="Larimer F."/>
            <person name="Land M."/>
            <person name="Hauser L."/>
            <person name="Kyrpides N."/>
            <person name="Mikhailova N."/>
            <person name="Marsh T."/>
            <person name="Richardson P."/>
        </authorList>
    </citation>
    <scope>NUCLEOTIDE SEQUENCE [LARGE SCALE GENOMIC DNA]</scope>
    <source>
        <strain>12J</strain>
    </source>
</reference>
<comment type="function">
    <text evidence="1">NDH-1 shuttles electrons from NADH, via FMN and iron-sulfur (Fe-S) centers, to quinones in the respiratory chain. The immediate electron acceptor for the enzyme in this species is believed to be ubiquinone. Couples the redox reaction to proton translocation (for every two electrons transferred, four hydrogen ions are translocated across the cytoplasmic membrane), and thus conserves the redox energy in a proton gradient.</text>
</comment>
<comment type="catalytic activity">
    <reaction evidence="1">
        <text>a quinone + NADH + 5 H(+)(in) = a quinol + NAD(+) + 4 H(+)(out)</text>
        <dbReference type="Rhea" id="RHEA:57888"/>
        <dbReference type="ChEBI" id="CHEBI:15378"/>
        <dbReference type="ChEBI" id="CHEBI:24646"/>
        <dbReference type="ChEBI" id="CHEBI:57540"/>
        <dbReference type="ChEBI" id="CHEBI:57945"/>
        <dbReference type="ChEBI" id="CHEBI:132124"/>
    </reaction>
</comment>
<comment type="subunit">
    <text evidence="1">NDH-1 is composed of 14 different subunits. Subunits NuoB, C, D, E, F, and G constitute the peripheral sector of the complex.</text>
</comment>
<comment type="subcellular location">
    <subcellularLocation>
        <location evidence="1">Cell inner membrane</location>
        <topology evidence="1">Peripheral membrane protein</topology>
        <orientation evidence="1">Cytoplasmic side</orientation>
    </subcellularLocation>
</comment>
<comment type="similarity">
    <text evidence="1">Belongs to the complex I 49 kDa subunit family.</text>
</comment>
<protein>
    <recommendedName>
        <fullName evidence="1">NADH-quinone oxidoreductase subunit D</fullName>
        <ecNumber evidence="1">7.1.1.-</ecNumber>
    </recommendedName>
    <alternativeName>
        <fullName evidence="1">NADH dehydrogenase I subunit D</fullName>
    </alternativeName>
    <alternativeName>
        <fullName evidence="1">NDH-1 subunit D</fullName>
    </alternativeName>
</protein>
<proteinExistence type="inferred from homology"/>
<accession>B2U7Q8</accession>
<dbReference type="EC" id="7.1.1.-" evidence="1"/>
<dbReference type="EMBL" id="CP001068">
    <property type="protein sequence ID" value="ACD27345.1"/>
    <property type="molecule type" value="Genomic_DNA"/>
</dbReference>
<dbReference type="SMR" id="B2U7Q8"/>
<dbReference type="STRING" id="402626.Rpic_2211"/>
<dbReference type="KEGG" id="rpi:Rpic_2211"/>
<dbReference type="eggNOG" id="COG0649">
    <property type="taxonomic scope" value="Bacteria"/>
</dbReference>
<dbReference type="HOGENOM" id="CLU_015134_1_1_4"/>
<dbReference type="GO" id="GO:0005886">
    <property type="term" value="C:plasma membrane"/>
    <property type="evidence" value="ECO:0007669"/>
    <property type="project" value="UniProtKB-SubCell"/>
</dbReference>
<dbReference type="GO" id="GO:0051287">
    <property type="term" value="F:NAD binding"/>
    <property type="evidence" value="ECO:0007669"/>
    <property type="project" value="InterPro"/>
</dbReference>
<dbReference type="GO" id="GO:0050136">
    <property type="term" value="F:NADH:ubiquinone reductase (non-electrogenic) activity"/>
    <property type="evidence" value="ECO:0007669"/>
    <property type="project" value="UniProtKB-UniRule"/>
</dbReference>
<dbReference type="GO" id="GO:0048038">
    <property type="term" value="F:quinone binding"/>
    <property type="evidence" value="ECO:0007669"/>
    <property type="project" value="UniProtKB-KW"/>
</dbReference>
<dbReference type="FunFam" id="1.10.645.10:FF:000005">
    <property type="entry name" value="NADH-quinone oxidoreductase subunit D"/>
    <property type="match status" value="1"/>
</dbReference>
<dbReference type="Gene3D" id="1.10.645.10">
    <property type="entry name" value="Cytochrome-c3 Hydrogenase, chain B"/>
    <property type="match status" value="1"/>
</dbReference>
<dbReference type="HAMAP" id="MF_01358">
    <property type="entry name" value="NDH1_NuoD"/>
    <property type="match status" value="1"/>
</dbReference>
<dbReference type="InterPro" id="IPR001135">
    <property type="entry name" value="NADH_Q_OxRdtase_suD"/>
</dbReference>
<dbReference type="InterPro" id="IPR014029">
    <property type="entry name" value="NADH_UbQ_OxRdtase_49kDa_CS"/>
</dbReference>
<dbReference type="InterPro" id="IPR022885">
    <property type="entry name" value="NDH1_su_D/H"/>
</dbReference>
<dbReference type="InterPro" id="IPR029014">
    <property type="entry name" value="NiFe-Hase_large"/>
</dbReference>
<dbReference type="NCBIfam" id="TIGR01962">
    <property type="entry name" value="NuoD"/>
    <property type="match status" value="1"/>
</dbReference>
<dbReference type="NCBIfam" id="NF004739">
    <property type="entry name" value="PRK06075.1"/>
    <property type="match status" value="1"/>
</dbReference>
<dbReference type="PANTHER" id="PTHR11993:SF10">
    <property type="entry name" value="NADH DEHYDROGENASE [UBIQUINONE] IRON-SULFUR PROTEIN 2, MITOCHONDRIAL"/>
    <property type="match status" value="1"/>
</dbReference>
<dbReference type="PANTHER" id="PTHR11993">
    <property type="entry name" value="NADH-UBIQUINONE OXIDOREDUCTASE 49 KDA SUBUNIT"/>
    <property type="match status" value="1"/>
</dbReference>
<dbReference type="Pfam" id="PF00346">
    <property type="entry name" value="Complex1_49kDa"/>
    <property type="match status" value="1"/>
</dbReference>
<dbReference type="SUPFAM" id="SSF56762">
    <property type="entry name" value="HydB/Nqo4-like"/>
    <property type="match status" value="1"/>
</dbReference>
<dbReference type="PROSITE" id="PS00535">
    <property type="entry name" value="COMPLEX1_49K"/>
    <property type="match status" value="1"/>
</dbReference>
<evidence type="ECO:0000255" key="1">
    <source>
        <dbReference type="HAMAP-Rule" id="MF_01358"/>
    </source>
</evidence>
<keyword id="KW-0997">Cell inner membrane</keyword>
<keyword id="KW-1003">Cell membrane</keyword>
<keyword id="KW-0472">Membrane</keyword>
<keyword id="KW-0520">NAD</keyword>
<keyword id="KW-0874">Quinone</keyword>
<keyword id="KW-1278">Translocase</keyword>
<keyword id="KW-0813">Transport</keyword>
<keyword id="KW-0830">Ubiquinone</keyword>
<gene>
    <name evidence="1" type="primary">nuoD</name>
    <name type="ordered locus">Rpic_2211</name>
</gene>
<sequence>MADIKNYTLNFGPQHPAAHGVLRLVLELDGEVIQRADPHIGLLHRATEKLAEQKTWIQSVPYMDRLDYVSMMVNEHAYVMAIERLLGLEVPLRAQYIRVMFDEITRIMNHLMWIGSHALDVGAMAVFLYAFREREDLFDMYEAVSGARMHAAYYRPGGVYRDLPDTMPQYKASKVRNEKALAALNQTRSGSLLDFIEDFTNRFPKYVDEYETLLTDNRIWKQRLVGIGVVSPERALNKGFSGAMLRGSGIEWDVRKKQPYEVYDRIDFDIPVGVNGDCYDRYLVRVEEMRQSNRIIRQCIEWLRKNPGPVITDNHKVAPPSRVDMKTNMEELIHHFKLFTEGMHVPEGEAYAAVEHPKGEFGIYAISDGANKPYRLKIRAPGFVHLAALDEMAKGHMIADAVTIIGTQDIVFGEIDR</sequence>
<feature type="chain" id="PRO_0000371920" description="NADH-quinone oxidoreductase subunit D">
    <location>
        <begin position="1"/>
        <end position="417"/>
    </location>
</feature>